<evidence type="ECO:0000250" key="1"/>
<evidence type="ECO:0000250" key="2">
    <source>
        <dbReference type="UniProtKB" id="Q9Y468"/>
    </source>
</evidence>
<evidence type="ECO:0000255" key="3">
    <source>
        <dbReference type="PROSITE-ProRule" id="PRU00184"/>
    </source>
</evidence>
<evidence type="ECO:0000255" key="4">
    <source>
        <dbReference type="PROSITE-ProRule" id="PRU01143"/>
    </source>
</evidence>
<evidence type="ECO:0000256" key="5">
    <source>
        <dbReference type="SAM" id="MobiDB-lite"/>
    </source>
</evidence>
<evidence type="ECO:0000269" key="6">
    <source>
    </source>
</evidence>
<evidence type="ECO:0000305" key="7"/>
<gene>
    <name type="primary">L3mbtl1</name>
    <name type="synonym">Kiaa0681</name>
    <name type="synonym">L3mbt</name>
    <name type="synonym">L3mbtl</name>
</gene>
<accession>A2A5N8</accession>
<accession>Q5DU20</accession>
<reference key="1">
    <citation type="submission" date="2005-02" db="EMBL/GenBank/DDBJ databases">
        <title>Prediction of the coding sequences of mouse homologues of KIAA gene. The complete nucleotide sequences of mouse KIAA-homologous cDNAs identified by screening of terminal sequences of cDNA clones randomly sampled from size-fractionated libraries.</title>
        <authorList>
            <person name="Okazaki N."/>
            <person name="Kikuno R.F."/>
            <person name="Ohara R."/>
            <person name="Inamoto S."/>
            <person name="Nagase T."/>
            <person name="Ohara O."/>
            <person name="Koga H."/>
        </authorList>
    </citation>
    <scope>NUCLEOTIDE SEQUENCE [LARGE SCALE MRNA]</scope>
    <source>
        <tissue>Fetal brain</tissue>
    </source>
</reference>
<reference key="2">
    <citation type="journal article" date="2009" name="PLoS Biol.">
        <title>Lineage-specific biology revealed by a finished genome assembly of the mouse.</title>
        <authorList>
            <person name="Church D.M."/>
            <person name="Goodstadt L."/>
            <person name="Hillier L.W."/>
            <person name="Zody M.C."/>
            <person name="Goldstein S."/>
            <person name="She X."/>
            <person name="Bult C.J."/>
            <person name="Agarwala R."/>
            <person name="Cherry J.L."/>
            <person name="DiCuccio M."/>
            <person name="Hlavina W."/>
            <person name="Kapustin Y."/>
            <person name="Meric P."/>
            <person name="Maglott D."/>
            <person name="Birtle Z."/>
            <person name="Marques A.C."/>
            <person name="Graves T."/>
            <person name="Zhou S."/>
            <person name="Teague B."/>
            <person name="Potamousis K."/>
            <person name="Churas C."/>
            <person name="Place M."/>
            <person name="Herschleb J."/>
            <person name="Runnheim R."/>
            <person name="Forrest D."/>
            <person name="Amos-Landgraf J."/>
            <person name="Schwartz D.C."/>
            <person name="Cheng Z."/>
            <person name="Lindblad-Toh K."/>
            <person name="Eichler E.E."/>
            <person name="Ponting C.P."/>
        </authorList>
    </citation>
    <scope>NUCLEOTIDE SEQUENCE [LARGE SCALE GENOMIC DNA]</scope>
    <source>
        <strain>C57BL/6J</strain>
    </source>
</reference>
<reference key="3">
    <citation type="submission" date="2005-07" db="EMBL/GenBank/DDBJ databases">
        <authorList>
            <person name="Mural R.J."/>
            <person name="Adams M.D."/>
            <person name="Myers E.W."/>
            <person name="Smith H.O."/>
            <person name="Venter J.C."/>
        </authorList>
    </citation>
    <scope>NUCLEOTIDE SEQUENCE [LARGE SCALE GENOMIC DNA]</scope>
</reference>
<reference key="4">
    <citation type="journal article" date="2010" name="J. Biol. Chem.">
        <title>Chromatin protein L3MBTL1 is dispensable for development and tumor suppression in mice.</title>
        <authorList>
            <person name="Qin J."/>
            <person name="Van Buren D."/>
            <person name="Huang H.S."/>
            <person name="Zhong L."/>
            <person name="Mostoslavsky R."/>
            <person name="Akbarian S."/>
            <person name="Hock H."/>
        </authorList>
    </citation>
    <scope>DISRUPTION PHENOTYPE</scope>
    <scope>TISSUE SPECIFICITY</scope>
</reference>
<protein>
    <recommendedName>
        <fullName>Lethal(3)malignant brain tumor-like protein 1</fullName>
        <shortName>H-l(3)mbt</shortName>
        <shortName>H-l(3)mbt protein</shortName>
        <shortName>L(3)mbt-like</shortName>
    </recommendedName>
    <alternativeName>
        <fullName>L(3)mbt protein homolog</fullName>
    </alternativeName>
</protein>
<feature type="chain" id="PRO_0000405831" description="Lethal(3)malignant brain tumor-like protein 1">
    <location>
        <begin position="1"/>
        <end position="826"/>
    </location>
</feature>
<feature type="repeat" description="MBT 1">
    <location>
        <begin position="280"/>
        <end position="380"/>
    </location>
</feature>
<feature type="repeat" description="MBT 2">
    <location>
        <begin position="388"/>
        <end position="487"/>
    </location>
</feature>
<feature type="repeat" description="MBT 3">
    <location>
        <begin position="496"/>
        <end position="591"/>
    </location>
</feature>
<feature type="domain" description="SAM" evidence="3">
    <location>
        <begin position="757"/>
        <end position="821"/>
    </location>
</feature>
<feature type="zinc finger region" description="CCHHC-type" evidence="4">
    <location>
        <begin position="619"/>
        <end position="662"/>
    </location>
</feature>
<feature type="region of interest" description="Disordered" evidence="5">
    <location>
        <begin position="167"/>
        <end position="197"/>
    </location>
</feature>
<feature type="region of interest" description="Disordered" evidence="5">
    <location>
        <begin position="220"/>
        <end position="271"/>
    </location>
</feature>
<feature type="region of interest" description="Interaction with monomethylated and dimethylated peptides" evidence="1">
    <location>
        <begin position="453"/>
        <end position="460"/>
    </location>
</feature>
<feature type="region of interest" description="Disordered" evidence="5">
    <location>
        <begin position="586"/>
        <end position="621"/>
    </location>
</feature>
<feature type="region of interest" description="Disordered" evidence="5">
    <location>
        <begin position="663"/>
        <end position="699"/>
    </location>
</feature>
<feature type="compositionally biased region" description="Basic and acidic residues" evidence="5">
    <location>
        <begin position="242"/>
        <end position="256"/>
    </location>
</feature>
<feature type="compositionally biased region" description="Basic residues" evidence="5">
    <location>
        <begin position="612"/>
        <end position="621"/>
    </location>
</feature>
<feature type="compositionally biased region" description="Basic residues" evidence="5">
    <location>
        <begin position="683"/>
        <end position="699"/>
    </location>
</feature>
<feature type="binding site" evidence="4">
    <location>
        <position position="628"/>
    </location>
    <ligand>
        <name>Zn(2+)</name>
        <dbReference type="ChEBI" id="CHEBI:29105"/>
    </ligand>
</feature>
<feature type="binding site" evidence="4">
    <location>
        <position position="633"/>
    </location>
    <ligand>
        <name>Zn(2+)</name>
        <dbReference type="ChEBI" id="CHEBI:29105"/>
    </ligand>
</feature>
<feature type="binding site" evidence="4">
    <location>
        <position position="646"/>
    </location>
    <ligand>
        <name>Zn(2+)</name>
        <dbReference type="ChEBI" id="CHEBI:29105"/>
    </ligand>
</feature>
<feature type="binding site" evidence="4">
    <location>
        <position position="652"/>
    </location>
    <ligand>
        <name>Zn(2+)</name>
        <dbReference type="ChEBI" id="CHEBI:29105"/>
    </ligand>
</feature>
<feature type="site" description="Mediates recognition of monomethylated and dimethylated peptides" evidence="1">
    <location>
        <position position="429"/>
    </location>
</feature>
<feature type="site" description="Positioned at the entrance of MBT 2 and is required for recognition of monomethylated and dimethylated peptides" evidence="1">
    <location>
        <position position="432"/>
    </location>
</feature>
<feature type="modified residue" description="Phosphoserine" evidence="2">
    <location>
        <position position="136"/>
    </location>
</feature>
<feature type="sequence conflict" description="In Ref. 1; BAD90413." evidence="7" ref="1">
    <original>A</original>
    <variation>V</variation>
    <location>
        <position position="824"/>
    </location>
</feature>
<proteinExistence type="evidence at transcript level"/>
<dbReference type="EMBL" id="AK220350">
    <property type="protein sequence ID" value="BAD90413.1"/>
    <property type="molecule type" value="mRNA"/>
</dbReference>
<dbReference type="EMBL" id="AL591584">
    <property type="status" value="NOT_ANNOTATED_CDS"/>
    <property type="molecule type" value="Genomic_DNA"/>
</dbReference>
<dbReference type="EMBL" id="AL606473">
    <property type="status" value="NOT_ANNOTATED_CDS"/>
    <property type="molecule type" value="Genomic_DNA"/>
</dbReference>
<dbReference type="EMBL" id="CH466551">
    <property type="protein sequence ID" value="EDL06309.1"/>
    <property type="molecule type" value="Genomic_DNA"/>
</dbReference>
<dbReference type="CCDS" id="CCDS38314.1"/>
<dbReference type="RefSeq" id="NP_001074807.1">
    <property type="nucleotide sequence ID" value="NM_001081338.3"/>
</dbReference>
<dbReference type="RefSeq" id="XP_011237848.1">
    <property type="nucleotide sequence ID" value="XM_011239546.2"/>
</dbReference>
<dbReference type="RefSeq" id="XP_030107036.1">
    <property type="nucleotide sequence ID" value="XM_030251176.2"/>
</dbReference>
<dbReference type="SMR" id="A2A5N8"/>
<dbReference type="BioGRID" id="232346">
    <property type="interactions" value="1"/>
</dbReference>
<dbReference type="ComplexPortal" id="CPX-470">
    <property type="entry name" value="L3MBTL1 complex"/>
</dbReference>
<dbReference type="FunCoup" id="A2A5N8">
    <property type="interactions" value="1580"/>
</dbReference>
<dbReference type="STRING" id="10090.ENSMUSP00000044038"/>
<dbReference type="GlyGen" id="A2A5N8">
    <property type="glycosylation" value="1 site"/>
</dbReference>
<dbReference type="iPTMnet" id="A2A5N8"/>
<dbReference type="PhosphoSitePlus" id="A2A5N8"/>
<dbReference type="PaxDb" id="10090-ENSMUSP00000044038"/>
<dbReference type="Ensembl" id="ENSMUST00000035751.12">
    <property type="protein sequence ID" value="ENSMUSP00000044038.6"/>
    <property type="gene ID" value="ENSMUSG00000035576.14"/>
</dbReference>
<dbReference type="GeneID" id="241764"/>
<dbReference type="KEGG" id="mmu:241764"/>
<dbReference type="UCSC" id="uc008nsd.1">
    <property type="organism name" value="mouse"/>
</dbReference>
<dbReference type="AGR" id="MGI:2676663"/>
<dbReference type="CTD" id="26013"/>
<dbReference type="MGI" id="MGI:2676663">
    <property type="gene designation" value="L3mbtl1"/>
</dbReference>
<dbReference type="VEuPathDB" id="HostDB:ENSMUSG00000035576"/>
<dbReference type="eggNOG" id="KOG3766">
    <property type="taxonomic scope" value="Eukaryota"/>
</dbReference>
<dbReference type="GeneTree" id="ENSGT00940000159708"/>
<dbReference type="HOGENOM" id="CLU_004064_0_0_1"/>
<dbReference type="InParanoid" id="A2A5N8"/>
<dbReference type="OMA" id="DIHAAGW"/>
<dbReference type="OrthoDB" id="8188861at2759"/>
<dbReference type="PhylomeDB" id="A2A5N8"/>
<dbReference type="TreeFam" id="TF316498"/>
<dbReference type="Reactome" id="R-MMU-6804760">
    <property type="pathway name" value="Regulation of TP53 Activity through Methylation"/>
</dbReference>
<dbReference type="BioGRID-ORCS" id="241764">
    <property type="hits" value="1 hit in 81 CRISPR screens"/>
</dbReference>
<dbReference type="PRO" id="PR:A2A5N8"/>
<dbReference type="Proteomes" id="UP000000589">
    <property type="component" value="Chromosome 2"/>
</dbReference>
<dbReference type="RNAct" id="A2A5N8">
    <property type="molecule type" value="protein"/>
</dbReference>
<dbReference type="Bgee" id="ENSMUSG00000035576">
    <property type="expression patterns" value="Expressed in hypothalamus and 65 other cell types or tissues"/>
</dbReference>
<dbReference type="ExpressionAtlas" id="A2A5N8">
    <property type="expression patterns" value="baseline and differential"/>
</dbReference>
<dbReference type="GO" id="GO:0000785">
    <property type="term" value="C:chromatin"/>
    <property type="evidence" value="ECO:0000250"/>
    <property type="project" value="UniProtKB"/>
</dbReference>
<dbReference type="GO" id="GO:0061793">
    <property type="term" value="C:chromatin lock complex"/>
    <property type="evidence" value="ECO:0000266"/>
    <property type="project" value="ComplexPortal"/>
</dbReference>
<dbReference type="GO" id="GO:0000793">
    <property type="term" value="C:condensed chromosome"/>
    <property type="evidence" value="ECO:0000250"/>
    <property type="project" value="UniProtKB"/>
</dbReference>
<dbReference type="GO" id="GO:0005654">
    <property type="term" value="C:nucleoplasm"/>
    <property type="evidence" value="ECO:0000250"/>
    <property type="project" value="UniProtKB"/>
</dbReference>
<dbReference type="GO" id="GO:0005634">
    <property type="term" value="C:nucleus"/>
    <property type="evidence" value="ECO:0000250"/>
    <property type="project" value="UniProtKB"/>
</dbReference>
<dbReference type="GO" id="GO:0003682">
    <property type="term" value="F:chromatin binding"/>
    <property type="evidence" value="ECO:0000250"/>
    <property type="project" value="UniProtKB"/>
</dbReference>
<dbReference type="GO" id="GO:0140005">
    <property type="term" value="F:histone H4K20me2 reader activity"/>
    <property type="evidence" value="ECO:0000250"/>
    <property type="project" value="UniProtKB"/>
</dbReference>
<dbReference type="GO" id="GO:0035064">
    <property type="term" value="F:methylated histone binding"/>
    <property type="evidence" value="ECO:0000266"/>
    <property type="project" value="MGI"/>
</dbReference>
<dbReference type="GO" id="GO:0031491">
    <property type="term" value="F:nucleosome binding"/>
    <property type="evidence" value="ECO:0000250"/>
    <property type="project" value="UniProtKB"/>
</dbReference>
<dbReference type="GO" id="GO:0008270">
    <property type="term" value="F:zinc ion binding"/>
    <property type="evidence" value="ECO:0007669"/>
    <property type="project" value="UniProtKB-KW"/>
</dbReference>
<dbReference type="GO" id="GO:0006325">
    <property type="term" value="P:chromatin organization"/>
    <property type="evidence" value="ECO:0000250"/>
    <property type="project" value="UniProtKB"/>
</dbReference>
<dbReference type="GO" id="GO:0040029">
    <property type="term" value="P:epigenetic regulation of gene expression"/>
    <property type="evidence" value="ECO:0000303"/>
    <property type="project" value="UniProtKB"/>
</dbReference>
<dbReference type="GO" id="GO:0030097">
    <property type="term" value="P:hemopoiesis"/>
    <property type="evidence" value="ECO:0000250"/>
    <property type="project" value="UniProtKB"/>
</dbReference>
<dbReference type="GO" id="GO:0031507">
    <property type="term" value="P:heterochromatin formation"/>
    <property type="evidence" value="ECO:0000266"/>
    <property type="project" value="ComplexPortal"/>
</dbReference>
<dbReference type="GO" id="GO:0045892">
    <property type="term" value="P:negative regulation of DNA-templated transcription"/>
    <property type="evidence" value="ECO:0000250"/>
    <property type="project" value="UniProtKB"/>
</dbReference>
<dbReference type="GO" id="GO:0045652">
    <property type="term" value="P:regulation of megakaryocyte differentiation"/>
    <property type="evidence" value="ECO:0000250"/>
    <property type="project" value="UniProtKB"/>
</dbReference>
<dbReference type="GO" id="GO:0007088">
    <property type="term" value="P:regulation of mitotic nuclear division"/>
    <property type="evidence" value="ECO:0000250"/>
    <property type="project" value="UniProtKB"/>
</dbReference>
<dbReference type="GO" id="GO:0006357">
    <property type="term" value="P:regulation of transcription by RNA polymerase II"/>
    <property type="evidence" value="ECO:0007669"/>
    <property type="project" value="UniProtKB-ARBA"/>
</dbReference>
<dbReference type="CDD" id="cd20131">
    <property type="entry name" value="MBT_L3MBTL1_rpt1"/>
    <property type="match status" value="1"/>
</dbReference>
<dbReference type="CDD" id="cd20134">
    <property type="entry name" value="MBT_L3MBTL1_rpt2"/>
    <property type="match status" value="1"/>
</dbReference>
<dbReference type="CDD" id="cd20137">
    <property type="entry name" value="MBT_L3MBTL1_rpt3"/>
    <property type="match status" value="1"/>
</dbReference>
<dbReference type="CDD" id="cd09582">
    <property type="entry name" value="SAM_Scm-like-3MBT3_4"/>
    <property type="match status" value="1"/>
</dbReference>
<dbReference type="FunFam" id="2.30.30.140:FF:000007">
    <property type="entry name" value="Lethal(3)malignant brain tumor-like protein 1"/>
    <property type="match status" value="2"/>
</dbReference>
<dbReference type="FunFam" id="1.10.150.50:FF:000035">
    <property type="entry name" value="lethal(3)malignant brain tumor-like protein 3 isoform X2"/>
    <property type="match status" value="1"/>
</dbReference>
<dbReference type="FunFam" id="4.10.320.30:FF:000001">
    <property type="entry name" value="Myelin transcription factor 1-like, a"/>
    <property type="match status" value="1"/>
</dbReference>
<dbReference type="Gene3D" id="2.30.30.140">
    <property type="match status" value="3"/>
</dbReference>
<dbReference type="Gene3D" id="4.10.320.30">
    <property type="match status" value="1"/>
</dbReference>
<dbReference type="Gene3D" id="1.10.150.50">
    <property type="entry name" value="Transcription Factor, Ets-1"/>
    <property type="match status" value="1"/>
</dbReference>
<dbReference type="InterPro" id="IPR004092">
    <property type="entry name" value="Mbt"/>
</dbReference>
<dbReference type="InterPro" id="IPR047361">
    <property type="entry name" value="MBT_L3MBTL1_rpt1"/>
</dbReference>
<dbReference type="InterPro" id="IPR047362">
    <property type="entry name" value="MBT_L3MBTL1_rpt3"/>
</dbReference>
<dbReference type="InterPro" id="IPR050548">
    <property type="entry name" value="PcG_chromatin_remod_factors"/>
</dbReference>
<dbReference type="InterPro" id="IPR001660">
    <property type="entry name" value="SAM"/>
</dbReference>
<dbReference type="InterPro" id="IPR013761">
    <property type="entry name" value="SAM/pointed_sf"/>
</dbReference>
<dbReference type="InterPro" id="IPR002515">
    <property type="entry name" value="Znf_C2H2C"/>
</dbReference>
<dbReference type="InterPro" id="IPR036060">
    <property type="entry name" value="Znf_C2H2C_sf"/>
</dbReference>
<dbReference type="PANTHER" id="PTHR12247:SF69">
    <property type="entry name" value="LETHAL(3)MALIGNANT BRAIN TUMOR-LIKE PROTEIN 1"/>
    <property type="match status" value="1"/>
</dbReference>
<dbReference type="PANTHER" id="PTHR12247">
    <property type="entry name" value="POLYCOMB GROUP PROTEIN"/>
    <property type="match status" value="1"/>
</dbReference>
<dbReference type="Pfam" id="PF02820">
    <property type="entry name" value="MBT"/>
    <property type="match status" value="3"/>
</dbReference>
<dbReference type="Pfam" id="PF00536">
    <property type="entry name" value="SAM_1"/>
    <property type="match status" value="1"/>
</dbReference>
<dbReference type="Pfam" id="PF01530">
    <property type="entry name" value="zf-C2HC"/>
    <property type="match status" value="1"/>
</dbReference>
<dbReference type="SMART" id="SM00561">
    <property type="entry name" value="MBT"/>
    <property type="match status" value="3"/>
</dbReference>
<dbReference type="SMART" id="SM00454">
    <property type="entry name" value="SAM"/>
    <property type="match status" value="1"/>
</dbReference>
<dbReference type="SUPFAM" id="SSF103637">
    <property type="entry name" value="CCHHC domain"/>
    <property type="match status" value="1"/>
</dbReference>
<dbReference type="SUPFAM" id="SSF47769">
    <property type="entry name" value="SAM/Pointed domain"/>
    <property type="match status" value="1"/>
</dbReference>
<dbReference type="SUPFAM" id="SSF63748">
    <property type="entry name" value="Tudor/PWWP/MBT"/>
    <property type="match status" value="3"/>
</dbReference>
<dbReference type="PROSITE" id="PS51079">
    <property type="entry name" value="MBT"/>
    <property type="match status" value="3"/>
</dbReference>
<dbReference type="PROSITE" id="PS50105">
    <property type="entry name" value="SAM_DOMAIN"/>
    <property type="match status" value="1"/>
</dbReference>
<dbReference type="PROSITE" id="PS51802">
    <property type="entry name" value="ZF_CCHHC"/>
    <property type="match status" value="1"/>
</dbReference>
<organism>
    <name type="scientific">Mus musculus</name>
    <name type="common">Mouse</name>
    <dbReference type="NCBI Taxonomy" id="10090"/>
    <lineage>
        <taxon>Eukaryota</taxon>
        <taxon>Metazoa</taxon>
        <taxon>Chordata</taxon>
        <taxon>Craniata</taxon>
        <taxon>Vertebrata</taxon>
        <taxon>Euteleostomi</taxon>
        <taxon>Mammalia</taxon>
        <taxon>Eutheria</taxon>
        <taxon>Euarchontoglires</taxon>
        <taxon>Glires</taxon>
        <taxon>Rodentia</taxon>
        <taxon>Myomorpha</taxon>
        <taxon>Muroidea</taxon>
        <taxon>Muridae</taxon>
        <taxon>Murinae</taxon>
        <taxon>Mus</taxon>
        <taxon>Mus</taxon>
    </lineage>
</organism>
<sequence length="826" mass="91781">MEGHTDMEILRTVKGSSTGEVNVHLVARDSAGPHPQLPTTAFIIPTNAATLGLPSTALDVPYPREPVHVGALERVAGSEPVTATILPQLSTGTGTNSTVRLLDWTGVSAPLPGSGMRFRINEYAPLNMIGVERPRSPEQRHEGGMARRDAGIQHPDVHQDRQDITSLEPPVDASSCKCQACGPQQSSGLDVGSSGDRCSQPFQKRSVIVENSGCTIASELLKPMKKRKHKEYQSPSEESEPEAVKQGEGKDAEREPTPSTPENEEWSRSQLVSSEKKDGWSWESYLEEQKAVTAPVSLFQDSQAVTHNKNGFKLGMKLEGIDPQHPSMYFILTVAEVCGYRLRLHFDGYSECHDFWVNANSPDIHPAGWFEKTGHKLQLPKGYKEEEFSWSQYLRSTKAQAAPKHLFVSQSHSTPPVGFQVGMKLEAVDRMNPSLVCVASVTDVVDSRFLVHFDDWGDTYDYWCDPSSPYIHPVGWCQKQGKPLTPPQDYPDPDSFCWEKYLEETGTSAVPNWAFKVRPPHSFLVNMKLEAVDRRNPALIRVASVEDVEDHRIKLHFDGWSHNYDFWIDADHPDIHPAGWCSKTGHPLEPPLRPRESSSVSPGGCPPLSHRSPPHTKTSKYNFHHRKCPTPGCDGSGHVTGKFTAHHCLSGCPLAEKNQSRLKAELSDSETAARKKNPSNLSPRKKPRHQGRIGRPPKYRKIPEEDLQALPPSVVHQSLFMSTLPTHADRPLSVCWEQHCKLLPGVAGISASTVSKWTIEEVFGFVQTLTGSEDQARLFKDEMIDGEAFLLLTQADIVKIMSVKLGPALKIYNAILMFKNTDDAFK</sequence>
<name>LMBL1_MOUSE</name>
<comment type="function">
    <text evidence="1">Polycomb group (PcG) protein that specifically recognizes and binds mono- and dimethyllysine residues on target proteins, thereby acting as a 'reader' of a network of post-translational modifications. PcG proteins maintain the transcriptionally repressive state of genes: acts as a chromatin compaction factor by recognizing and binding mono- and dimethylated histone H1b/H1-4 at 'Lys-26' (H1bK26me1 and H1bK26me2) and histone H4 at 'Lys-20' (H4K20me1 and H4K20me2), leading to condense chromatin and repress transcription. Recognizes and binds p53/TP53 monomethylated at 'Lys-382', leading to repress p53/TP53-target genes. Also recognizes and binds RB1/RB monomethylated at 'Lys-860'. Participates in the ETV6-mediated repression. Probably plays a role in cell proliferation. Overexpression induces multinucleated cells, suggesting that it is required to accomplish normal mitosis (By similarity).</text>
</comment>
<comment type="subunit">
    <text evidence="1">Homodimer. Interacts with RB1/RB (when monomethylated at 'Lys-860'). Interacts with p53/TP53 (when monomethylated at 'Lys-382'). Interacts with CBX3, ETV6, KMT5A and VCP/p97 (By similarity).</text>
</comment>
<comment type="subcellular location">
    <subcellularLocation>
        <location evidence="1">Nucleus</location>
    </subcellularLocation>
    <text evidence="1">Excluded from the nucleolus. Does not colocalize with the PcG protein BMI1, suggesting that these two proteins do not belong to the same complex (By similarity).</text>
</comment>
<comment type="tissue specificity">
    <text evidence="6">Highly expressed in brain, testis, eyes, and ES cells.</text>
</comment>
<comment type="domain">
    <text evidence="1">The MBT repeat 2 specifically recognizes and binds monomethylated and dimethylated proteins. In contrast, it does not bind trimethylated proteins. The MBT repeat 1 does not bind methylated peptides but inserts a proline ring in a Pro-Ser-Ser/Thr sequence context (By similarity).</text>
</comment>
<comment type="PTM">
    <text evidence="1">Ubiquitinated in a VCP/p97-dependent way following DNA damage, leading to its removal from DNA damage sites, promoting accessibility of H4K20me2 mark for DNA repair protein TP53BP1, which is then recruited to DNA damage sites.</text>
</comment>
<comment type="disruption phenotype">
    <text evidence="6">No visible phenotype. Mice develop and reproduc normally. Mice were followed for more than 2 years, without any alteration in normal lifespan or survival with or without sublethal irradiation.</text>
</comment>
<keyword id="KW-0156">Chromatin regulator</keyword>
<keyword id="KW-0479">Metal-binding</keyword>
<keyword id="KW-0539">Nucleus</keyword>
<keyword id="KW-0597">Phosphoprotein</keyword>
<keyword id="KW-1185">Reference proteome</keyword>
<keyword id="KW-0677">Repeat</keyword>
<keyword id="KW-0678">Repressor</keyword>
<keyword id="KW-0804">Transcription</keyword>
<keyword id="KW-0805">Transcription regulation</keyword>
<keyword id="KW-0832">Ubl conjugation</keyword>
<keyword id="KW-0862">Zinc</keyword>
<keyword id="KW-0863">Zinc-finger</keyword>